<geneLocation type="plasmid">
    <name>pIB1</name>
</geneLocation>
<geneLocation type="plasmid">
    <name>pYV</name>
</geneLocation>
<reference key="1">
    <citation type="journal article" date="1994" name="J. Bacteriol.">
        <title>The lcrB (yscN/U) gene cluster of Yersinia pseudotuberculosis is involved in Yop secretion and shows high homology to the spa gene clusters of Shigella flexneri and Salmonella typhimurium.</title>
        <authorList>
            <person name="Bergman T."/>
            <person name="Erickson K."/>
            <person name="Galyov E."/>
            <person name="Persson C."/>
            <person name="Wolf-Watz H."/>
        </authorList>
    </citation>
    <scope>NUCLEOTIDE SEQUENCE [GENOMIC DNA]</scope>
    <source>
        <strain>YPIII / Serotype O:3</strain>
        <plasmid>pIB1</plasmid>
    </source>
</reference>
<reference key="2">
    <citation type="journal article" date="2004" name="Proc. Natl. Acad. Sci. U.S.A.">
        <title>Insights into the evolution of Yersinia pestis through whole-genome comparison with Yersinia pseudotuberculosis.</title>
        <authorList>
            <person name="Chain P.S.G."/>
            <person name="Carniel E."/>
            <person name="Larimer F.W."/>
            <person name="Lamerdin J."/>
            <person name="Stoutland P.O."/>
            <person name="Regala W.M."/>
            <person name="Georgescu A.M."/>
            <person name="Vergez L.M."/>
            <person name="Land M.L."/>
            <person name="Motin V.L."/>
            <person name="Brubaker R.R."/>
            <person name="Fowler J."/>
            <person name="Hinnebusch J."/>
            <person name="Marceau M."/>
            <person name="Medigue C."/>
            <person name="Simonet M."/>
            <person name="Chenal-Francisque V."/>
            <person name="Souza B."/>
            <person name="Dacheux D."/>
            <person name="Elliott J.M."/>
            <person name="Derbise A."/>
            <person name="Hauser L.J."/>
            <person name="Garcia E."/>
        </authorList>
    </citation>
    <scope>NUCLEOTIDE SEQUENCE [LARGE SCALE GENOMIC DNA]</scope>
    <source>
        <strain>IP32953</strain>
        <plasmid>pYV</plasmid>
    </source>
</reference>
<name>YSCU_YERPS</name>
<protein>
    <recommendedName>
        <fullName>Yop proteins translocation protein U</fullName>
    </recommendedName>
</protein>
<feature type="chain" id="PRO_0000180962" description="Yop proteins translocation protein U">
    <location>
        <begin position="1"/>
        <end position="354"/>
    </location>
</feature>
<feature type="transmembrane region" description="Helical" evidence="1">
    <location>
        <begin position="30"/>
        <end position="50"/>
    </location>
</feature>
<feature type="transmembrane region" description="Helical" evidence="1">
    <location>
        <begin position="79"/>
        <end position="99"/>
    </location>
</feature>
<feature type="transmembrane region" description="Helical" evidence="1">
    <location>
        <begin position="138"/>
        <end position="158"/>
    </location>
</feature>
<feature type="transmembrane region" description="Helical" evidence="1">
    <location>
        <begin position="163"/>
        <end position="183"/>
    </location>
</feature>
<feature type="transmembrane region" description="Helical" evidence="1">
    <location>
        <begin position="187"/>
        <end position="207"/>
    </location>
</feature>
<feature type="region of interest" description="Disordered" evidence="2">
    <location>
        <begin position="1"/>
        <end position="20"/>
    </location>
</feature>
<feature type="helix" evidence="4">
    <location>
        <begin position="211"/>
        <end position="229"/>
    </location>
</feature>
<feature type="helix" evidence="4">
    <location>
        <begin position="233"/>
        <end position="246"/>
    </location>
</feature>
<feature type="helix" evidence="4">
    <location>
        <begin position="250"/>
        <end position="253"/>
    </location>
</feature>
<gene>
    <name type="primary">yscU</name>
    <name type="ordered locus">pYV0074</name>
</gene>
<evidence type="ECO:0000255" key="1"/>
<evidence type="ECO:0000256" key="2">
    <source>
        <dbReference type="SAM" id="MobiDB-lite"/>
    </source>
</evidence>
<evidence type="ECO:0000305" key="3"/>
<evidence type="ECO:0007829" key="4">
    <source>
        <dbReference type="PDB" id="2ML9"/>
    </source>
</evidence>
<organism>
    <name type="scientific">Yersinia pseudotuberculosis serotype I (strain IP32953)</name>
    <dbReference type="NCBI Taxonomy" id="273123"/>
    <lineage>
        <taxon>Bacteria</taxon>
        <taxon>Pseudomonadati</taxon>
        <taxon>Pseudomonadota</taxon>
        <taxon>Gammaproteobacteria</taxon>
        <taxon>Enterobacterales</taxon>
        <taxon>Yersiniaceae</taxon>
        <taxon>Yersinia</taxon>
    </lineage>
</organism>
<keyword id="KW-0002">3D-structure</keyword>
<keyword id="KW-1003">Cell membrane</keyword>
<keyword id="KW-0472">Membrane</keyword>
<keyword id="KW-0614">Plasmid</keyword>
<keyword id="KW-0653">Protein transport</keyword>
<keyword id="KW-0812">Transmembrane</keyword>
<keyword id="KW-1133">Transmembrane helix</keyword>
<keyword id="KW-0813">Transport</keyword>
<keyword id="KW-0843">Virulence</keyword>
<accession>P69987</accession>
<accession>P40300</accession>
<accession>Q663J2</accession>
<comment type="function">
    <text>Component of the yop secretion machinery.</text>
</comment>
<comment type="subcellular location">
    <subcellularLocation>
        <location evidence="3">Cell membrane</location>
        <topology evidence="3">Multi-pass membrane protein</topology>
    </subcellularLocation>
</comment>
<comment type="similarity">
    <text evidence="3">Belongs to the type III secretion exporter family.</text>
</comment>
<sequence length="354" mass="40382">MSGEKTEQPTPKKIRDARKKGQVAKSKEVVSTALIVALSAMLMGLSDYYFEHFSKLMLIPAEQSYLPFSQALSYVVDNVLLEFFYLCFPLLTVAALMAIASHVVQYGFLISGEAIKPDIKKINPIEGAKRIFSIKSLVEFLKSILKVVLLSILIWIIIKGNLVTLLQLPTCGIECITPLLGQILRQLMVICTVGFVVISIADYAFEYYQYIKELKMSKDEIKREYKEMEGSPEIKSKRRQFHQEIQSRNMRENVKRSSVVVANPTHIAIGILYKRGETPLPLVTFKYTDAQVQTVRKIAEEEGVPILQRIPLARALYWDALVDHYIPAEQIEATAEVLRWLERQNIEKQHSEML</sequence>
<dbReference type="EMBL" id="L25667">
    <property type="protein sequence ID" value="AAA27681.1"/>
    <property type="molecule type" value="Genomic_DNA"/>
</dbReference>
<dbReference type="EMBL" id="BX936399">
    <property type="protein sequence ID" value="CAF25417.1"/>
    <property type="molecule type" value="Genomic_DNA"/>
</dbReference>
<dbReference type="RefSeq" id="WP_002212936.1">
    <property type="nucleotide sequence ID" value="NZ_CP009711.1"/>
</dbReference>
<dbReference type="PDB" id="2ML9">
    <property type="method" value="NMR"/>
    <property type="chains" value="A=211-263"/>
</dbReference>
<dbReference type="PDBsum" id="2ML9"/>
<dbReference type="BMRB" id="P69987"/>
<dbReference type="SMR" id="P69987"/>
<dbReference type="MEROPS" id="N06.001"/>
<dbReference type="KEGG" id="ypo:BZ17_4260"/>
<dbReference type="KEGG" id="yps:pYV0074"/>
<dbReference type="PATRIC" id="fig|273123.14.peg.4496"/>
<dbReference type="EvolutionaryTrace" id="P69987"/>
<dbReference type="PHI-base" id="PHI:7903"/>
<dbReference type="Proteomes" id="UP000001011">
    <property type="component" value="Plasmid pYV"/>
</dbReference>
<dbReference type="GO" id="GO:0005886">
    <property type="term" value="C:plasma membrane"/>
    <property type="evidence" value="ECO:0007669"/>
    <property type="project" value="UniProtKB-SubCell"/>
</dbReference>
<dbReference type="GO" id="GO:0009306">
    <property type="term" value="P:protein secretion"/>
    <property type="evidence" value="ECO:0007669"/>
    <property type="project" value="InterPro"/>
</dbReference>
<dbReference type="FunFam" id="3.40.1690.10:FF:000007">
    <property type="entry name" value="Type III secretion appartus protein YscU"/>
    <property type="match status" value="1"/>
</dbReference>
<dbReference type="Gene3D" id="3.40.1690.10">
    <property type="entry name" value="secretion proteins EscU"/>
    <property type="match status" value="1"/>
</dbReference>
<dbReference type="InterPro" id="IPR006307">
    <property type="entry name" value="BsaZ-like"/>
</dbReference>
<dbReference type="InterPro" id="IPR006135">
    <property type="entry name" value="T3SS_substrate_exporter"/>
</dbReference>
<dbReference type="InterPro" id="IPR029025">
    <property type="entry name" value="T3SS_substrate_exporter_C"/>
</dbReference>
<dbReference type="NCBIfam" id="TIGR01404">
    <property type="entry name" value="FlhB_rel_III"/>
    <property type="match status" value="1"/>
</dbReference>
<dbReference type="PANTHER" id="PTHR30531">
    <property type="entry name" value="FLAGELLAR BIOSYNTHETIC PROTEIN FLHB"/>
    <property type="match status" value="1"/>
</dbReference>
<dbReference type="PANTHER" id="PTHR30531:SF14">
    <property type="entry name" value="SURFACE PRESENTATION OF ANTIGENS PROTEIN SPAS"/>
    <property type="match status" value="1"/>
</dbReference>
<dbReference type="Pfam" id="PF01312">
    <property type="entry name" value="Bac_export_2"/>
    <property type="match status" value="1"/>
</dbReference>
<dbReference type="PRINTS" id="PR00950">
    <property type="entry name" value="TYPE3IMSPROT"/>
</dbReference>
<dbReference type="SUPFAM" id="SSF160544">
    <property type="entry name" value="EscU C-terminal domain-like"/>
    <property type="match status" value="1"/>
</dbReference>
<proteinExistence type="evidence at protein level"/>